<organism>
    <name type="scientific">Mus musculus</name>
    <name type="common">Mouse</name>
    <dbReference type="NCBI Taxonomy" id="10090"/>
    <lineage>
        <taxon>Eukaryota</taxon>
        <taxon>Metazoa</taxon>
        <taxon>Chordata</taxon>
        <taxon>Craniata</taxon>
        <taxon>Vertebrata</taxon>
        <taxon>Euteleostomi</taxon>
        <taxon>Mammalia</taxon>
        <taxon>Eutheria</taxon>
        <taxon>Euarchontoglires</taxon>
        <taxon>Glires</taxon>
        <taxon>Rodentia</taxon>
        <taxon>Myomorpha</taxon>
        <taxon>Muroidea</taxon>
        <taxon>Muridae</taxon>
        <taxon>Murinae</taxon>
        <taxon>Mus</taxon>
        <taxon>Mus</taxon>
    </lineage>
</organism>
<keyword id="KW-0002">3D-structure</keyword>
<keyword id="KW-0025">Alternative splicing</keyword>
<keyword id="KW-1003">Cell membrane</keyword>
<keyword id="KW-0966">Cell projection</keyword>
<keyword id="KW-0175">Coiled coil</keyword>
<keyword id="KW-0256">Endoplasmic reticulum</keyword>
<keyword id="KW-0325">Glycoprotein</keyword>
<keyword id="KW-0407">Ion channel</keyword>
<keyword id="KW-0406">Ion transport</keyword>
<keyword id="KW-1071">Ligand-gated ion channel</keyword>
<keyword id="KW-0472">Membrane</keyword>
<keyword id="KW-0675">Receptor</keyword>
<keyword id="KW-1185">Reference proteome</keyword>
<keyword id="KW-0716">Sensory transduction</keyword>
<keyword id="KW-0812">Transmembrane</keyword>
<keyword id="KW-1133">Transmembrane helix</keyword>
<keyword id="KW-0813">Transport</keyword>
<keyword id="KW-0844">Vision</keyword>
<proteinExistence type="evidence at protein level"/>
<comment type="function">
    <text evidence="8 9 13 15">Constitutively open nonselective divalent cation-conducting channels which mediate the influx of Ca(2+), Mg(2+), Mn(2+), Ba(2+), and Ni(2+) into the cytoplasm, leading to membrane depolarization. Impermeable to zinc ions. In addition, forms heteromultimeric ion channels with TRPM3 which are permeable for calcium and zinc ions. Plays an essential role for the depolarizing photoresponse of retinal ON bipolar cells (PubMed:19861548). In the dark, tonic release of glutamate activates the G-protein coupled receptor for glutamate (GRM6), its activation induces the release of G(o) and the beta-gamma G protein dimer. Both subunits can interact and inactivate the TRPM1 channel. A light onset, induces decrease in glutamate release and deactivation of GRM6 leading to channel opening and membrane depolarization (PubMed:19966281, PubMed:26883481). May play a role in metastasis suppression (PubMed:9537257).</text>
</comment>
<comment type="catalytic activity">
    <reaction evidence="1">
        <text>Ca(2+)(in) = Ca(2+)(out)</text>
        <dbReference type="Rhea" id="RHEA:29671"/>
        <dbReference type="ChEBI" id="CHEBI:29108"/>
    </reaction>
</comment>
<comment type="catalytic activity">
    <reaction evidence="1">
        <text>Mg(2+)(in) = Mg(2+)(out)</text>
        <dbReference type="Rhea" id="RHEA:29827"/>
        <dbReference type="ChEBI" id="CHEBI:18420"/>
    </reaction>
</comment>
<comment type="catalytic activity">
    <reaction evidence="1">
        <text>Mn(2+)(in) = Mn(2+)(out)</text>
        <dbReference type="Rhea" id="RHEA:28699"/>
        <dbReference type="ChEBI" id="CHEBI:29035"/>
    </reaction>
</comment>
<comment type="catalytic activity">
    <reaction evidence="1">
        <text>Ni(2+)(in) = Ni(2+)(out)</text>
        <dbReference type="Rhea" id="RHEA:29831"/>
        <dbReference type="ChEBI" id="CHEBI:49786"/>
    </reaction>
</comment>
<comment type="activity regulation">
    <text evidence="1 13">Inhibited by extracellular zinc ions (By similarity). Inhibited by intracellular Mg(2+) (By similarity). Activated by the neuroactive steroid pregnenolone sulfate (By similarity). Negatively regulated by activation of GRM6 receptors in the ON-bipolar cells (PubMed:26883481).</text>
</comment>
<comment type="subunit">
    <text evidence="1 10 11 12 13">Homodimer (PubMed:25112866). Interacts with TRPM3; the interaction results in the formation of a heteromultimeric cation channel complex that are functionally different from the homomeric channels (By similarity). Interacts with GPR179 (PubMed:24114537, PubMed:24790204). Associates with both guanine nucleotide-binding proteins G(o) and beta-gamma G protein dimer; implicated in directly regulating TRPM1 channel open-state (PubMed:26883481).</text>
</comment>
<comment type="subcellular location">
    <subcellularLocation>
        <location evidence="1">Cell membrane</location>
        <topology evidence="2">Multi-pass membrane protein</topology>
    </subcellularLocation>
    <subcellularLocation>
        <location evidence="14">Endoplasmic reticulum membrane</location>
        <topology evidence="2">Multi-pass membrane protein</topology>
    </subcellularLocation>
    <subcellularLocation>
        <location evidence="14">Cell projection</location>
        <location evidence="14">Axon</location>
    </subcellularLocation>
    <text evidence="1">In ON-bipolar cells is intracellular and located predominantly in the ER, and not at the plasma membrane or Golgi apparatus.</text>
</comment>
<comment type="alternative products">
    <event type="alternative splicing"/>
    <isoform>
        <id>Q2TV84-1</id>
        <name evidence="7">1</name>
        <sequence type="displayed"/>
    </isoform>
    <isoform>
        <id>Q2TV84-2</id>
        <name evidence="6">2</name>
        <sequence type="described" ref="VSP_052753 VSP_052754"/>
    </isoform>
    <isoform>
        <id>Q2TV84-3</id>
        <name evidence="7 15">3</name>
        <sequence type="described" ref="VSP_052752 VSP_052757 VSP_052758"/>
    </isoform>
    <isoform>
        <id>Q2TV84-4</id>
        <name evidence="5 7">4</name>
        <sequence type="described" ref="VSP_052752 VSP_052755 VSP_052756"/>
    </isoform>
    <isoform>
        <id>Q2TV84-5</id>
        <name evidence="5">5</name>
        <sequence type="described" ref="VSP_052751 VSP_052755 VSP_052756"/>
    </isoform>
</comment>
<comment type="tissue specificity">
    <text evidence="8 9 14 15">Expressed in the retina where it localizes on dendritic tips of ON bipolar cells (PubMed:19966281). Specifically, it is expressed in retinal bipolar cells (BPCs) of the ON subtype (PubMed:30027108). Not detected in brain, lung, liver, heart, kidney, spleen or small intestine. Also expressed at high levels in poorly metastatic variants of B16 melanoma and at much reduced levels in highly metastatic variants of B16 melanoma.</text>
</comment>
<comment type="disruption phenotype">
    <text evidence="9">In Trpm1-dficient mice neither rod bipolar cells nor cone ON bipolar cells show photoresponses.</text>
</comment>
<comment type="similarity">
    <text evidence="20">Belongs to the transient receptor (TC 1.A.4) family. LTrpC subfamily. TRPM1 sub-subfamily.</text>
</comment>
<name>TRPM1_MOUSE</name>
<sequence length="1622" mass="183527">MGSMRKMSSSFKRGSIKSSTSGSQKGQKAWIEKTFCKRECIFVIPSTKDPNRCCCGQLTNQHIPPLPSGAPSTTGEDTKQADTQSGKWSVSKHTQSYPTDSYGILEFQGGGYSNKAMYIRVSYDTKPDSLLHLMVKDWQLELPKLLISVHGGLQSFEMQPKLKQVFGKGLIKAAMTTGAWIFTGGVSTGVVSHVGDALKDHSSKSRGRLCAIGIAPWGMVENKEDLIGKDVTRVYQTMSNPLSKLSVLNNSHTHFILADNGTLGKYGAEVKLRRQLEKHISLQKINTRLGQGVPVVGLVVEGGPNVVSIVLEYLKEDPPVPVVVCDGSGRASDILSFAHKYCDEGGVINESLRDQLLVTIQKTFNYSKSQSYQLFAIIMECMKKKELVTVFRMGSEGQQDVEMAILTALLKGTNASAPDQLSLALAWNRVDIARSQIFVFGPHWPPLGSLAPPVDTKATEKEKKPPTATTKGRGKGKGKKKGKVKEEVEEETDPRKLELLNWVNALEQAMLDALVLDRVDFVKLLIENGVNMQHFLTIPRLEELYNTRLGPPNTLHLLVRDVKKSNLPPDYHISLIDIGLVLEYLMGGAYRCNYTRKSFRTLYNNLFGPKRPKALKLLGMEDDEPPAKGKKKKKKKKEEEIDIDVDDPAVSRFQYPFHELMVWAVLMKRQKMAVFLWQRGEECMAKALVACKLYKAMAHESSESELVDDISQDLDNNSKDFGQLAVELLDQSYKHDEQVAMKLLTYELKNWSNSTCLKLAVAAKHRDFIAHTCSQMLLTDMWMGRLRMRKNPGLKVIMGILIPPTILFLEFRTYDDFSYQTSKENEDGKEKEEENVDANADAGSRKGDEENEHKKQRSIPIGTKICEFYNAPIVKFWFYTISYLGYLLLFNYVILVRMDGWPSPQEWIVISYIVSLALEKIREILMSEPGKLSQKIKVWLQEYWNITDLVAISMFMVGAILRLQSQPYMGYGRVIYCVDIILWYIRVLDIFGVNKYLGPYVMMIGKMMIDMLYFVVIMLVVLMSFGVARQAILHPEEKPSWKLARNIFYMPYWMIYGEVFADQIDLYAMEINPPCGENLYDEEGKRLPPCIPGAWLTPALMACYLLVANILLVNLLIAVFNNTFFEVKSISNQVWKFQRYQLIMTFHDRPVLPPPMIILSHIYIIIMRLSGRCRKKREGDQEERDRGLKLFLSDEELKKLHEFEEQCVQEHFREKEDEQQSSSDERIRVTSERVENMSMRLEEINERENFMKTSLQTVDLRLSQLEELSGRMVSALENLAGIDRSDLIQARSRASSECEATYLLRQSSINSADGYSLYRYHFNGEELLFEEPALSTSPGTAFRKKTYSFRVKDEDAKSHLDQPSNLHHTPGPSPPATPGRSRLALEGPLSTELRPGSDPGISAGEFDPRADFKSTEAAPSLNAAGVTGTQLTVESTDSHPLRESKLVRYYPGDPNTYKTMKSRSFVYTEGRKLVRGLSNWSAEYSSIMDQAWNATEWRCQVQRITRSRSTDIPYIVSEAASQDELEDEHRGSLLDPQISRSALTVSDRPEKENLLSVKPHQTLGFPCLRSRSLHGRPRSAEPAPSKLDRAGHASSTSNLAVMSVVPEGQNTQQEKRSAETEC</sequence>
<feature type="chain" id="PRO_0000328931" description="Transient receptor potential cation channel subfamily M member 1">
    <location>
        <begin position="1"/>
        <end position="1622"/>
    </location>
</feature>
<feature type="topological domain" description="Cytoplasmic" evidence="1">
    <location>
        <begin position="1"/>
        <end position="875"/>
    </location>
</feature>
<feature type="transmembrane region" description="Helical" evidence="2">
    <location>
        <begin position="876"/>
        <end position="896"/>
    </location>
</feature>
<feature type="topological domain" description="Extracellular" evidence="20">
    <location>
        <begin position="897"/>
        <end position="942"/>
    </location>
</feature>
<feature type="transmembrane region" description="Helical" evidence="2">
    <location>
        <begin position="943"/>
        <end position="963"/>
    </location>
</feature>
<feature type="topological domain" description="Cytoplasmic" evidence="20">
    <location>
        <begin position="964"/>
        <end position="973"/>
    </location>
</feature>
<feature type="transmembrane region" description="Helical" evidence="2">
    <location>
        <begin position="974"/>
        <end position="994"/>
    </location>
</feature>
<feature type="topological domain" description="Extracellular" evidence="20">
    <location>
        <begin position="995"/>
        <end position="1006"/>
    </location>
</feature>
<feature type="transmembrane region" description="Helical" evidence="2">
    <location>
        <begin position="1007"/>
        <end position="1027"/>
    </location>
</feature>
<feature type="topological domain" description="Cytoplasmic" evidence="20">
    <location>
        <begin position="1028"/>
        <end position="1099"/>
    </location>
</feature>
<feature type="transmembrane region" description="Helical" evidence="2">
    <location>
        <begin position="1100"/>
        <end position="1120"/>
    </location>
</feature>
<feature type="topological domain" description="Extracellular" evidence="20">
    <location>
        <begin position="1121"/>
        <end position="1150"/>
    </location>
</feature>
<feature type="transmembrane region" description="Helical" evidence="2">
    <location>
        <begin position="1151"/>
        <end position="1171"/>
    </location>
</feature>
<feature type="topological domain" description="Cytoplasmic" evidence="1">
    <location>
        <begin position="1172"/>
        <end position="1622"/>
    </location>
</feature>
<feature type="region of interest" description="Disordered" evidence="4">
    <location>
        <begin position="1"/>
        <end position="25"/>
    </location>
</feature>
<feature type="region of interest" description="Disordered" evidence="4">
    <location>
        <begin position="64"/>
        <end position="95"/>
    </location>
</feature>
<feature type="region of interest" description="Disordered" evidence="4">
    <location>
        <begin position="450"/>
        <end position="490"/>
    </location>
</feature>
<feature type="region of interest" description="Disordered" evidence="4">
    <location>
        <begin position="618"/>
        <end position="641"/>
    </location>
</feature>
<feature type="region of interest" description="Disordered" evidence="4">
    <location>
        <begin position="822"/>
        <end position="856"/>
    </location>
</feature>
<feature type="region of interest" description="Disordered" evidence="4">
    <location>
        <begin position="1354"/>
        <end position="1383"/>
    </location>
</feature>
<feature type="region of interest" description="Disordered" evidence="4">
    <location>
        <begin position="1389"/>
        <end position="1408"/>
    </location>
</feature>
<feature type="region of interest" description="Disordered" evidence="4">
    <location>
        <begin position="1567"/>
        <end position="1622"/>
    </location>
</feature>
<feature type="coiled-coil region" evidence="2">
    <location>
        <begin position="1224"/>
        <end position="1252"/>
    </location>
</feature>
<feature type="compositionally biased region" description="Low complexity" evidence="4">
    <location>
        <begin position="8"/>
        <end position="25"/>
    </location>
</feature>
<feature type="compositionally biased region" description="Polar residues" evidence="4">
    <location>
        <begin position="70"/>
        <end position="95"/>
    </location>
</feature>
<feature type="compositionally biased region" description="Basic residues" evidence="4">
    <location>
        <begin position="472"/>
        <end position="483"/>
    </location>
</feature>
<feature type="compositionally biased region" description="Basic and acidic residues" evidence="4">
    <location>
        <begin position="823"/>
        <end position="832"/>
    </location>
</feature>
<feature type="compositionally biased region" description="Basic and acidic residues" evidence="4">
    <location>
        <begin position="843"/>
        <end position="853"/>
    </location>
</feature>
<feature type="compositionally biased region" description="Basic and acidic residues" evidence="4">
    <location>
        <begin position="1613"/>
        <end position="1622"/>
    </location>
</feature>
<feature type="glycosylation site" description="N-linked (GlcNAc...) asparagine" evidence="3">
    <location>
        <position position="1121"/>
    </location>
</feature>
<feature type="splice variant" id="VSP_052751" description="In isoform 5." evidence="16">
    <location>
        <begin position="1"/>
        <end position="133"/>
    </location>
</feature>
<feature type="splice variant" id="VSP_052752" description="In isoform 3 and isoform 4." evidence="16 18 19">
    <location>
        <begin position="1"/>
        <end position="116"/>
    </location>
</feature>
<feature type="splice variant" id="VSP_052753" description="In isoform 2." evidence="17">
    <original>G</original>
    <variation>A</variation>
    <location>
        <position position="189"/>
    </location>
</feature>
<feature type="splice variant" id="VSP_052754" description="In isoform 2." evidence="17">
    <location>
        <begin position="190"/>
        <end position="1073"/>
    </location>
</feature>
<feature type="splice variant" id="VSP_052755" description="In isoform 4 and isoform 5." evidence="16 18">
    <original>NALEQAMLDALVLDRVDFVKLLIENGVNMQHFLTIPRLEELYNTRLGPPNTLHLLV</original>
    <variation>CAHVLVSLPVCLQSSGLAFPKFSGRDSLVTFASSLPGWGTDGLMSILHGNSVFTSM</variation>
    <location>
        <begin position="504"/>
        <end position="559"/>
    </location>
</feature>
<feature type="splice variant" id="VSP_052756" description="In isoform 4 and isoform 5." evidence="16 18">
    <location>
        <begin position="560"/>
        <end position="1622"/>
    </location>
</feature>
<feature type="splice variant" id="VSP_052757" description="In isoform 3." evidence="18 19">
    <original>PKALKLLGMEDDEPPAKGKKKKKKKKEEEIDIDVDDPAVSRFQYPFH</original>
    <variation>VELSRHTVSCASQSNMWFLDVLPQKPTCAECNSSPHLSQTDITPPLP</variation>
    <location>
        <begin position="612"/>
        <end position="658"/>
    </location>
</feature>
<feature type="splice variant" id="VSP_052758" description="In isoform 3." evidence="18 19">
    <location>
        <begin position="659"/>
        <end position="1622"/>
    </location>
</feature>
<feature type="sequence conflict" description="In Ref. 1; AAC13683." evidence="20" ref="1">
    <original>P</original>
    <variation>S</variation>
    <location>
        <position position="160"/>
    </location>
</feature>
<feature type="sequence conflict" description="In Ref. 5; BAE28794." evidence="20" ref="5">
    <original>S</original>
    <variation>Y</variation>
    <location>
        <position position="246"/>
    </location>
</feature>
<feature type="sequence conflict" description="In Ref. 1; AAC13683 and 5; BAE28340/BAE28448/BAE28453." evidence="20" ref="1 5">
    <original>T</original>
    <variation>A</variation>
    <location>
        <position position="459"/>
    </location>
</feature>
<feature type="sequence conflict" description="In Ref. 1; CAI30140." evidence="20" ref="1">
    <original>S</original>
    <variation>G</variation>
    <location>
        <position position="1481"/>
    </location>
</feature>
<feature type="helix" evidence="28">
    <location>
        <begin position="611"/>
        <end position="618"/>
    </location>
</feature>
<protein>
    <recommendedName>
        <fullName>Transient receptor potential cation channel subfamily M member 1</fullName>
    </recommendedName>
    <alternativeName>
        <fullName>Long transient receptor potential channel 1</fullName>
        <shortName>LTrpC1</shortName>
    </alternativeName>
    <alternativeName>
        <fullName>Melastatin-1</fullName>
    </alternativeName>
</protein>
<gene>
    <name evidence="26" type="primary">Trpm1</name>
    <name type="synonym">Ltrpc1</name>
</gene>
<evidence type="ECO:0000250" key="1">
    <source>
        <dbReference type="UniProtKB" id="Q7Z4N2"/>
    </source>
</evidence>
<evidence type="ECO:0000255" key="2"/>
<evidence type="ECO:0000255" key="3">
    <source>
        <dbReference type="PROSITE-ProRule" id="PRU00498"/>
    </source>
</evidence>
<evidence type="ECO:0000256" key="4">
    <source>
        <dbReference type="SAM" id="MobiDB-lite"/>
    </source>
</evidence>
<evidence type="ECO:0000269" key="5">
    <source>
    </source>
</evidence>
<evidence type="ECO:0000269" key="6">
    <source>
    </source>
</evidence>
<evidence type="ECO:0000269" key="7">
    <source>
    </source>
</evidence>
<evidence type="ECO:0000269" key="8">
    <source>
    </source>
</evidence>
<evidence type="ECO:0000269" key="9">
    <source>
    </source>
</evidence>
<evidence type="ECO:0000269" key="10">
    <source>
    </source>
</evidence>
<evidence type="ECO:0000269" key="11">
    <source>
    </source>
</evidence>
<evidence type="ECO:0000269" key="12">
    <source>
    </source>
</evidence>
<evidence type="ECO:0000269" key="13">
    <source>
    </source>
</evidence>
<evidence type="ECO:0000269" key="14">
    <source>
    </source>
</evidence>
<evidence type="ECO:0000269" key="15">
    <source>
    </source>
</evidence>
<evidence type="ECO:0000303" key="16">
    <source>
    </source>
</evidence>
<evidence type="ECO:0000303" key="17">
    <source>
    </source>
</evidence>
<evidence type="ECO:0000303" key="18">
    <source>
    </source>
</evidence>
<evidence type="ECO:0000303" key="19">
    <source>
    </source>
</evidence>
<evidence type="ECO:0000305" key="20"/>
<evidence type="ECO:0000312" key="21">
    <source>
        <dbReference type="EMBL" id="AAC13683.1"/>
    </source>
</evidence>
<evidence type="ECO:0000312" key="22">
    <source>
        <dbReference type="EMBL" id="AAH82560.1"/>
    </source>
</evidence>
<evidence type="ECO:0000312" key="23">
    <source>
        <dbReference type="EMBL" id="BAE28794.1"/>
    </source>
</evidence>
<evidence type="ECO:0000312" key="24">
    <source>
        <dbReference type="EMBL" id="BAE37771.1"/>
    </source>
</evidence>
<evidence type="ECO:0000312" key="25">
    <source>
        <dbReference type="EMBL" id="CAI30140.1"/>
    </source>
</evidence>
<evidence type="ECO:0000312" key="26">
    <source>
        <dbReference type="MGI" id="MGI:1330305"/>
    </source>
</evidence>
<evidence type="ECO:0007744" key="27">
    <source>
        <dbReference type="PDB" id="6RMV"/>
    </source>
</evidence>
<evidence type="ECO:0007829" key="28">
    <source>
        <dbReference type="PDB" id="6RMV"/>
    </source>
</evidence>
<reference evidence="20 21" key="1">
    <citation type="journal article" date="1998" name="Cancer Res.">
        <title>Down-regulation of the novel gene melastatin correlates with potential for melanoma metastasis.</title>
        <authorList>
            <person name="Duncan L.M."/>
            <person name="Deeds J."/>
            <person name="Hunter J."/>
            <person name="Shao J."/>
            <person name="Holmgren L.M."/>
            <person name="Woolf E.A."/>
            <person name="Tepper R.I."/>
            <person name="Shyjan A.W."/>
        </authorList>
    </citation>
    <scope>NUCLEOTIDE SEQUENCE [MRNA] (ISOFORM 3)</scope>
    <scope>FUNCTION</scope>
    <scope>TISSUE SPECIFICITY</scope>
</reference>
<reference evidence="20 25" key="2">
    <citation type="journal article" date="2005" name="Naunyn Schmiedebergs Arch. Pharmacol.">
        <title>Transcriptional regulation and processing increase the functional variability of TRPM channels.</title>
        <authorList>
            <person name="Lis A."/>
            <person name="Wissenbach U."/>
            <person name="Philipp S.E."/>
        </authorList>
    </citation>
    <scope>NUCLEOTIDE SEQUENCE [MRNA]</scope>
    <scope>ALTERNATIVE SPLICING (ISOFORM 2)</scope>
    <source>
        <strain evidence="25">C57BL/6J X 129/SvJ</strain>
        <tissue evidence="25">Eye</tissue>
    </source>
</reference>
<reference key="3">
    <citation type="journal article" date="2010" name="Proc. Natl. Acad. Sci. U.S.A.">
        <title>TRPM1 is a component of the retinal ON bipolar cell transduction channel in the mGluR6 cascade.</title>
        <authorList>
            <person name="Koike C."/>
            <person name="Obara T."/>
            <person name="Uriu Y."/>
            <person name="Numata T."/>
            <person name="Sanuki R."/>
            <person name="Miyata K."/>
            <person name="Koyasu T."/>
            <person name="Ueno S."/>
            <person name="Funabiki K."/>
            <person name="Tani A."/>
            <person name="Ueda H."/>
            <person name="Kondo M."/>
            <person name="Mori Y."/>
            <person name="Tachibana M."/>
            <person name="Furukawa T."/>
        </authorList>
    </citation>
    <scope>NUCLEOTIDE SEQUENCE [MRNA] (ISOFORM 1)</scope>
    <scope>FUNCTION</scope>
    <scope>TISSUE SPECIFICITY</scope>
    <scope>DISRUPTION PHENOTYPE</scope>
</reference>
<reference evidence="20" key="4">
    <citation type="submission" date="2010-05" db="EMBL/GenBank/DDBJ databases">
        <authorList>
            <person name="Koike C."/>
            <person name="Furukawa T."/>
        </authorList>
    </citation>
    <scope>SEQUENCE REVISION TO N-TERMINUS</scope>
</reference>
<reference evidence="20 23" key="5">
    <citation type="journal article" date="2005" name="Science">
        <title>The transcriptional landscape of the mammalian genome.</title>
        <authorList>
            <person name="Carninci P."/>
            <person name="Kasukawa T."/>
            <person name="Katayama S."/>
            <person name="Gough J."/>
            <person name="Frith M.C."/>
            <person name="Maeda N."/>
            <person name="Oyama R."/>
            <person name="Ravasi T."/>
            <person name="Lenhard B."/>
            <person name="Wells C."/>
            <person name="Kodzius R."/>
            <person name="Shimokawa K."/>
            <person name="Bajic V.B."/>
            <person name="Brenner S.E."/>
            <person name="Batalov S."/>
            <person name="Forrest A.R."/>
            <person name="Zavolan M."/>
            <person name="Davis M.J."/>
            <person name="Wilming L.G."/>
            <person name="Aidinis V."/>
            <person name="Allen J.E."/>
            <person name="Ambesi-Impiombato A."/>
            <person name="Apweiler R."/>
            <person name="Aturaliya R.N."/>
            <person name="Bailey T.L."/>
            <person name="Bansal M."/>
            <person name="Baxter L."/>
            <person name="Beisel K.W."/>
            <person name="Bersano T."/>
            <person name="Bono H."/>
            <person name="Chalk A.M."/>
            <person name="Chiu K.P."/>
            <person name="Choudhary V."/>
            <person name="Christoffels A."/>
            <person name="Clutterbuck D.R."/>
            <person name="Crowe M.L."/>
            <person name="Dalla E."/>
            <person name="Dalrymple B.P."/>
            <person name="de Bono B."/>
            <person name="Della Gatta G."/>
            <person name="di Bernardo D."/>
            <person name="Down T."/>
            <person name="Engstrom P."/>
            <person name="Fagiolini M."/>
            <person name="Faulkner G."/>
            <person name="Fletcher C.F."/>
            <person name="Fukushima T."/>
            <person name="Furuno M."/>
            <person name="Futaki S."/>
            <person name="Gariboldi M."/>
            <person name="Georgii-Hemming P."/>
            <person name="Gingeras T.R."/>
            <person name="Gojobori T."/>
            <person name="Green R.E."/>
            <person name="Gustincich S."/>
            <person name="Harbers M."/>
            <person name="Hayashi Y."/>
            <person name="Hensch T.K."/>
            <person name="Hirokawa N."/>
            <person name="Hill D."/>
            <person name="Huminiecki L."/>
            <person name="Iacono M."/>
            <person name="Ikeo K."/>
            <person name="Iwama A."/>
            <person name="Ishikawa T."/>
            <person name="Jakt M."/>
            <person name="Kanapin A."/>
            <person name="Katoh M."/>
            <person name="Kawasawa Y."/>
            <person name="Kelso J."/>
            <person name="Kitamura H."/>
            <person name="Kitano H."/>
            <person name="Kollias G."/>
            <person name="Krishnan S.P."/>
            <person name="Kruger A."/>
            <person name="Kummerfeld S.K."/>
            <person name="Kurochkin I.V."/>
            <person name="Lareau L.F."/>
            <person name="Lazarevic D."/>
            <person name="Lipovich L."/>
            <person name="Liu J."/>
            <person name="Liuni S."/>
            <person name="McWilliam S."/>
            <person name="Madan Babu M."/>
            <person name="Madera M."/>
            <person name="Marchionni L."/>
            <person name="Matsuda H."/>
            <person name="Matsuzawa S."/>
            <person name="Miki H."/>
            <person name="Mignone F."/>
            <person name="Miyake S."/>
            <person name="Morris K."/>
            <person name="Mottagui-Tabar S."/>
            <person name="Mulder N."/>
            <person name="Nakano N."/>
            <person name="Nakauchi H."/>
            <person name="Ng P."/>
            <person name="Nilsson R."/>
            <person name="Nishiguchi S."/>
            <person name="Nishikawa S."/>
            <person name="Nori F."/>
            <person name="Ohara O."/>
            <person name="Okazaki Y."/>
            <person name="Orlando V."/>
            <person name="Pang K.C."/>
            <person name="Pavan W.J."/>
            <person name="Pavesi G."/>
            <person name="Pesole G."/>
            <person name="Petrovsky N."/>
            <person name="Piazza S."/>
            <person name="Reed J."/>
            <person name="Reid J.F."/>
            <person name="Ring B.Z."/>
            <person name="Ringwald M."/>
            <person name="Rost B."/>
            <person name="Ruan Y."/>
            <person name="Salzberg S.L."/>
            <person name="Sandelin A."/>
            <person name="Schneider C."/>
            <person name="Schoenbach C."/>
            <person name="Sekiguchi K."/>
            <person name="Semple C.A."/>
            <person name="Seno S."/>
            <person name="Sessa L."/>
            <person name="Sheng Y."/>
            <person name="Shibata Y."/>
            <person name="Shimada H."/>
            <person name="Shimada K."/>
            <person name="Silva D."/>
            <person name="Sinclair B."/>
            <person name="Sperling S."/>
            <person name="Stupka E."/>
            <person name="Sugiura K."/>
            <person name="Sultana R."/>
            <person name="Takenaka Y."/>
            <person name="Taki K."/>
            <person name="Tammoja K."/>
            <person name="Tan S.L."/>
            <person name="Tang S."/>
            <person name="Taylor M.S."/>
            <person name="Tegner J."/>
            <person name="Teichmann S.A."/>
            <person name="Ueda H.R."/>
            <person name="van Nimwegen E."/>
            <person name="Verardo R."/>
            <person name="Wei C.L."/>
            <person name="Yagi K."/>
            <person name="Yamanishi H."/>
            <person name="Zabarovsky E."/>
            <person name="Zhu S."/>
            <person name="Zimmer A."/>
            <person name="Hide W."/>
            <person name="Bult C."/>
            <person name="Grimmond S.M."/>
            <person name="Teasdale R.D."/>
            <person name="Liu E.T."/>
            <person name="Brusic V."/>
            <person name="Quackenbush J."/>
            <person name="Wahlestedt C."/>
            <person name="Mattick J.S."/>
            <person name="Hume D.A."/>
            <person name="Kai C."/>
            <person name="Sasaki D."/>
            <person name="Tomaru Y."/>
            <person name="Fukuda S."/>
            <person name="Kanamori-Katayama M."/>
            <person name="Suzuki M."/>
            <person name="Aoki J."/>
            <person name="Arakawa T."/>
            <person name="Iida J."/>
            <person name="Imamura K."/>
            <person name="Itoh M."/>
            <person name="Kato T."/>
            <person name="Kawaji H."/>
            <person name="Kawagashira N."/>
            <person name="Kawashima T."/>
            <person name="Kojima M."/>
            <person name="Kondo S."/>
            <person name="Konno H."/>
            <person name="Nakano K."/>
            <person name="Ninomiya N."/>
            <person name="Nishio T."/>
            <person name="Okada M."/>
            <person name="Plessy C."/>
            <person name="Shibata K."/>
            <person name="Shiraki T."/>
            <person name="Suzuki S."/>
            <person name="Tagami M."/>
            <person name="Waki K."/>
            <person name="Watahiki A."/>
            <person name="Okamura-Oho Y."/>
            <person name="Suzuki H."/>
            <person name="Kawai J."/>
            <person name="Hayashizaki Y."/>
        </authorList>
    </citation>
    <scope>NUCLEOTIDE SEQUENCE [LARGE SCALE MRNA] (ISOFORMS 3 AND 4)</scope>
    <scope>NUCLEOTIDE SEQUENCE [LARGE SCALE MRNA] OF 1-828 (ISOFORM 1)</scope>
    <source>
        <strain evidence="23">C57BL/6J</strain>
        <tissue evidence="24">Embryonic eye</tissue>
        <tissue evidence="23">Retina</tissue>
    </source>
</reference>
<reference key="6">
    <citation type="journal article" date="2009" name="PLoS Biol.">
        <title>Lineage-specific biology revealed by a finished genome assembly of the mouse.</title>
        <authorList>
            <person name="Church D.M."/>
            <person name="Goodstadt L."/>
            <person name="Hillier L.W."/>
            <person name="Zody M.C."/>
            <person name="Goldstein S."/>
            <person name="She X."/>
            <person name="Bult C.J."/>
            <person name="Agarwala R."/>
            <person name="Cherry J.L."/>
            <person name="DiCuccio M."/>
            <person name="Hlavina W."/>
            <person name="Kapustin Y."/>
            <person name="Meric P."/>
            <person name="Maglott D."/>
            <person name="Birtle Z."/>
            <person name="Marques A.C."/>
            <person name="Graves T."/>
            <person name="Zhou S."/>
            <person name="Teague B."/>
            <person name="Potamousis K."/>
            <person name="Churas C."/>
            <person name="Place M."/>
            <person name="Herschleb J."/>
            <person name="Runnheim R."/>
            <person name="Forrest D."/>
            <person name="Amos-Landgraf J."/>
            <person name="Schwartz D.C."/>
            <person name="Cheng Z."/>
            <person name="Lindblad-Toh K."/>
            <person name="Eichler E.E."/>
            <person name="Ponting C.P."/>
        </authorList>
    </citation>
    <scope>NUCLEOTIDE SEQUENCE [LARGE SCALE GENOMIC DNA]</scope>
    <source>
        <strain>C57BL/6J</strain>
    </source>
</reference>
<reference evidence="20 22" key="7">
    <citation type="journal article" date="2004" name="Genome Res.">
        <title>The status, quality, and expansion of the NIH full-length cDNA project: the Mammalian Gene Collection (MGC).</title>
        <authorList>
            <consortium name="The MGC Project Team"/>
        </authorList>
    </citation>
    <scope>NUCLEOTIDE SEQUENCE [LARGE SCALE MRNA] (ISOFORMS 4 AND 5)</scope>
    <source>
        <strain evidence="22">C57BL/6J</strain>
        <tissue evidence="22">Eye</tissue>
    </source>
</reference>
<reference key="8">
    <citation type="journal article" date="2009" name="Proc. Natl. Acad. Sci. U.S.A.">
        <title>TRPM1 is required for the depolarizing light response in retinal ON-bipolar cells.</title>
        <authorList>
            <person name="Morgans C.W."/>
            <person name="Zhang J."/>
            <person name="Jeffrey B.G."/>
            <person name="Nelson S.M."/>
            <person name="Burke N.S."/>
            <person name="Duvoisin R.M."/>
            <person name="Brown R.L."/>
        </authorList>
    </citation>
    <scope>FUNCTION</scope>
    <scope>TISSUE SPECIFICITY</scope>
</reference>
<reference key="9">
    <citation type="journal article" date="2013" name="Invest. Ophthalmol. Vis. Sci.">
        <title>Orphan receptor GPR179 forms macromolecular complexes with components of metabotropic signaling cascade in retina ON-bipolar neurons.</title>
        <authorList>
            <person name="Orlandi C."/>
            <person name="Cao Y."/>
            <person name="Martemyanov K.A."/>
        </authorList>
    </citation>
    <scope>INTERACTION WITH GPR179</scope>
</reference>
<reference key="10">
    <citation type="journal article" date="2014" name="J. Neurosci.">
        <title>GPR179 is required for high sensitivity of the mGluR6 signaling cascade in depolarizing bipolar cells.</title>
        <authorList>
            <person name="Ray T.A."/>
            <person name="Heath K.M."/>
            <person name="Hasan N."/>
            <person name="Noel J.M."/>
            <person name="Samuels I.S."/>
            <person name="Martemyanov K.A."/>
            <person name="Peachey N.S."/>
            <person name="McCall M.A."/>
            <person name="Gregg R.G."/>
        </authorList>
    </citation>
    <scope>INTERACTION WITH GPR179</scope>
</reference>
<reference key="11">
    <citation type="journal article" date="2014" name="J. Biol. Chem.">
        <title>Oligomeric state of purified transient receptor potential melastatin-1 (TRPM1), a protein essential for dim light vision.</title>
        <authorList>
            <person name="Agosto M.A."/>
            <person name="Zhang Z."/>
            <person name="He F."/>
            <person name="Anastassov I.A."/>
            <person name="Wright S.J."/>
            <person name="McGehee J."/>
            <person name="Wensel T.G."/>
        </authorList>
    </citation>
    <scope>SUBUNIT</scope>
</reference>
<reference key="12">
    <citation type="journal article" date="2016" name="Sci. Rep.">
        <title>The TRPM1 channel in ON-bipolar cells is gated by both the alpha and the betagamma subunits of the G-protein Go.</title>
        <authorList>
            <person name="Xu Y."/>
            <person name="Orlandi C."/>
            <person name="Cao Y."/>
            <person name="Yang S."/>
            <person name="Choi C.I."/>
            <person name="Pagadala V."/>
            <person name="Birnbaumer L."/>
            <person name="Martemyanov K.A."/>
            <person name="Vardi N."/>
        </authorList>
    </citation>
    <scope>FUNCTION</scope>
    <scope>ACTIVITY REGULATION</scope>
    <scope>SUBUNIT</scope>
</reference>
<reference key="13">
    <citation type="journal article" date="2018" name="ENeuro">
        <title>A Large Endoplasmic Reticulum-Resident Pool of TRPM1 in Retinal ON-Bipolar Cells.</title>
        <authorList>
            <person name="Agosto M.A."/>
            <person name="Anastassov I.A."/>
            <person name="Robichaux M.A."/>
            <person name="Wensel T.G."/>
        </authorList>
    </citation>
    <scope>SUBCELLULAR LOCATION</scope>
    <scope>TISSUE SPECIFICITY</scope>
</reference>
<reference evidence="27" key="14">
    <citation type="journal article" date="2020" name="Proc. Natl. Acad. Sci. U.S.A.">
        <title>The structural basis for an on-off switch controlling Gbetagamma-mediated inhibition of TRPM3 channels.</title>
        <authorList>
            <person name="Behrendt M."/>
            <person name="Gruss F."/>
            <person name="Enzeroth R."/>
            <person name="Dembla S."/>
            <person name="Zhao S."/>
            <person name="Crassous P.A."/>
            <person name="Mohr F."/>
            <person name="Nys M."/>
            <person name="Louros N."/>
            <person name="Gallardo R."/>
            <person name="Zorzini V."/>
            <person name="Wagner D."/>
            <person name="Economou A."/>
            <person name="Rousseau F."/>
            <person name="Schymkowitz J."/>
            <person name="Philipp S.E."/>
            <person name="Rohacs T."/>
            <person name="Ulens C."/>
            <person name="Oberwinkler J."/>
        </authorList>
    </citation>
    <scope>X-RAY CRYSTALLOGRAPHY (1.94 ANGSTROMS) OF 610-623</scope>
</reference>
<dbReference type="EMBL" id="AF047714">
    <property type="protein sequence ID" value="AAC13683.1"/>
    <property type="molecule type" value="mRNA"/>
</dbReference>
<dbReference type="EMBL" id="AJ867481">
    <property type="protein sequence ID" value="CAI30140.1"/>
    <property type="molecule type" value="mRNA"/>
</dbReference>
<dbReference type="EMBL" id="AY180104">
    <property type="protein sequence ID" value="AAO43093.2"/>
    <property type="molecule type" value="mRNA"/>
</dbReference>
<dbReference type="EMBL" id="AK148094">
    <property type="protein sequence ID" value="BAE28340.1"/>
    <property type="molecule type" value="mRNA"/>
</dbReference>
<dbReference type="EMBL" id="AK148268">
    <property type="protein sequence ID" value="BAE28448.1"/>
    <property type="molecule type" value="mRNA"/>
</dbReference>
<dbReference type="EMBL" id="AK148275">
    <property type="protein sequence ID" value="BAE28453.1"/>
    <property type="molecule type" value="mRNA"/>
</dbReference>
<dbReference type="EMBL" id="AK149290">
    <property type="protein sequence ID" value="BAE28794.1"/>
    <property type="molecule type" value="mRNA"/>
</dbReference>
<dbReference type="EMBL" id="AK164395">
    <property type="protein sequence ID" value="BAE37771.1"/>
    <property type="molecule type" value="mRNA"/>
</dbReference>
<dbReference type="EMBL" id="AC127565">
    <property type="status" value="NOT_ANNOTATED_CDS"/>
    <property type="molecule type" value="Genomic_DNA"/>
</dbReference>
<dbReference type="EMBL" id="AC139849">
    <property type="status" value="NOT_ANNOTATED_CDS"/>
    <property type="molecule type" value="Genomic_DNA"/>
</dbReference>
<dbReference type="EMBL" id="BC082560">
    <property type="protein sequence ID" value="AAH82560.1"/>
    <property type="molecule type" value="mRNA"/>
</dbReference>
<dbReference type="EMBL" id="BC085168">
    <property type="protein sequence ID" value="AAH85168.1"/>
    <property type="molecule type" value="mRNA"/>
</dbReference>
<dbReference type="CCDS" id="CCDS21332.2">
    <molecule id="Q2TV84-1"/>
</dbReference>
<dbReference type="CCDS" id="CCDS39975.2">
    <molecule id="Q2TV84-3"/>
</dbReference>
<dbReference type="RefSeq" id="NP_001034193.2">
    <molecule id="Q2TV84-1"/>
    <property type="nucleotide sequence ID" value="NM_001039104.2"/>
</dbReference>
<dbReference type="RefSeq" id="NP_061222.3">
    <molecule id="Q2TV84-3"/>
    <property type="nucleotide sequence ID" value="NM_018752.3"/>
</dbReference>
<dbReference type="RefSeq" id="XP_017177502.1">
    <molecule id="Q2TV84-3"/>
    <property type="nucleotide sequence ID" value="XM_017322013.2"/>
</dbReference>
<dbReference type="PDB" id="6RMV">
    <property type="method" value="X-ray"/>
    <property type="resolution" value="1.94 A"/>
    <property type="chains" value="C=610-623"/>
</dbReference>
<dbReference type="PDBsum" id="6RMV"/>
<dbReference type="SMR" id="Q2TV84"/>
<dbReference type="BioGRID" id="201440">
    <property type="interactions" value="2"/>
</dbReference>
<dbReference type="CORUM" id="Q2TV84"/>
<dbReference type="FunCoup" id="Q2TV84">
    <property type="interactions" value="187"/>
</dbReference>
<dbReference type="STRING" id="10090.ENSMUSP00000082318"/>
<dbReference type="BindingDB" id="Q2TV84"/>
<dbReference type="ChEMBL" id="CHEMBL4879460"/>
<dbReference type="GlyCosmos" id="Q2TV84">
    <property type="glycosylation" value="1 site, No reported glycans"/>
</dbReference>
<dbReference type="GlyGen" id="Q2TV84">
    <property type="glycosylation" value="2 sites"/>
</dbReference>
<dbReference type="iPTMnet" id="Q2TV84"/>
<dbReference type="PhosphoSitePlus" id="Q2TV84"/>
<dbReference type="PaxDb" id="10090-ENSMUSP00000082318"/>
<dbReference type="ProteomicsDB" id="297522">
    <molecule id="Q2TV84-1"/>
</dbReference>
<dbReference type="ProteomicsDB" id="297523">
    <molecule id="Q2TV84-2"/>
</dbReference>
<dbReference type="ProteomicsDB" id="297524">
    <molecule id="Q2TV84-3"/>
</dbReference>
<dbReference type="ProteomicsDB" id="297525">
    <molecule id="Q2TV84-4"/>
</dbReference>
<dbReference type="ProteomicsDB" id="297526">
    <molecule id="Q2TV84-5"/>
</dbReference>
<dbReference type="Antibodypedia" id="9410">
    <property type="antibodies" value="83 antibodies from 23 providers"/>
</dbReference>
<dbReference type="DNASU" id="17364"/>
<dbReference type="Ensembl" id="ENSMUST00000085222.12">
    <molecule id="Q2TV84-1"/>
    <property type="protein sequence ID" value="ENSMUSP00000082318.6"/>
    <property type="gene ID" value="ENSMUSG00000030523.19"/>
</dbReference>
<dbReference type="Ensembl" id="ENSMUST00000177102.8">
    <molecule id="Q2TV84-3"/>
    <property type="protein sequence ID" value="ENSMUSP00000134947.3"/>
    <property type="gene ID" value="ENSMUSG00000030523.19"/>
</dbReference>
<dbReference type="Ensembl" id="ENSMUST00000205731.2">
    <molecule id="Q2TV84-4"/>
    <property type="protein sequence ID" value="ENSMUSP00000145776.2"/>
    <property type="gene ID" value="ENSMUSG00000030523.19"/>
</dbReference>
<dbReference type="Ensembl" id="ENSMUST00000206314.2">
    <molecule id="Q2TV84-2"/>
    <property type="protein sequence ID" value="ENSMUSP00000145593.2"/>
    <property type="gene ID" value="ENSMUSG00000030523.19"/>
</dbReference>
<dbReference type="Ensembl" id="ENSMUST00000206706.2">
    <molecule id="Q2TV84-5"/>
    <property type="protein sequence ID" value="ENSMUSP00000146265.2"/>
    <property type="gene ID" value="ENSMUSG00000030523.19"/>
</dbReference>
<dbReference type="GeneID" id="17364"/>
<dbReference type="KEGG" id="mmu:17364"/>
<dbReference type="UCSC" id="uc009hfp.2">
    <molecule id="Q2TV84-2"/>
    <property type="organism name" value="mouse"/>
</dbReference>
<dbReference type="UCSC" id="uc009hfr.2">
    <molecule id="Q2TV84-4"/>
    <property type="organism name" value="mouse"/>
</dbReference>
<dbReference type="UCSC" id="uc009hft.2">
    <molecule id="Q2TV84-5"/>
    <property type="organism name" value="mouse"/>
</dbReference>
<dbReference type="UCSC" id="uc009hfu.2">
    <molecule id="Q2TV84-3"/>
    <property type="organism name" value="mouse"/>
</dbReference>
<dbReference type="UCSC" id="uc009hfw.2">
    <molecule id="Q2TV84-1"/>
    <property type="organism name" value="mouse"/>
</dbReference>
<dbReference type="AGR" id="MGI:1330305"/>
<dbReference type="CTD" id="4308"/>
<dbReference type="MGI" id="MGI:1330305">
    <property type="gene designation" value="Trpm1"/>
</dbReference>
<dbReference type="VEuPathDB" id="HostDB:ENSMUSG00000030523"/>
<dbReference type="eggNOG" id="KOG3614">
    <property type="taxonomic scope" value="Eukaryota"/>
</dbReference>
<dbReference type="GeneTree" id="ENSGT00940000155024"/>
<dbReference type="HOGENOM" id="CLU_022373_0_0_1"/>
<dbReference type="InParanoid" id="Q2TV84"/>
<dbReference type="OrthoDB" id="59885at9989"/>
<dbReference type="PhylomeDB" id="Q2TV84"/>
<dbReference type="TreeFam" id="TF314204"/>
<dbReference type="Reactome" id="R-MMU-3295583">
    <property type="pathway name" value="TRP channels"/>
</dbReference>
<dbReference type="BioGRID-ORCS" id="17364">
    <property type="hits" value="1 hit in 76 CRISPR screens"/>
</dbReference>
<dbReference type="ChiTaRS" id="Trpm1">
    <property type="organism name" value="mouse"/>
</dbReference>
<dbReference type="PRO" id="PR:Q2TV84"/>
<dbReference type="Proteomes" id="UP000000589">
    <property type="component" value="Chromosome 7"/>
</dbReference>
<dbReference type="RNAct" id="Q2TV84">
    <property type="molecule type" value="protein"/>
</dbReference>
<dbReference type="Bgee" id="ENSMUSG00000030523">
    <property type="expression patterns" value="Expressed in iris and 69 other cell types or tissues"/>
</dbReference>
<dbReference type="ExpressionAtlas" id="Q2TV84">
    <property type="expression patterns" value="baseline and differential"/>
</dbReference>
<dbReference type="GO" id="GO:0030424">
    <property type="term" value="C:axon"/>
    <property type="evidence" value="ECO:0007669"/>
    <property type="project" value="UniProtKB-SubCell"/>
</dbReference>
<dbReference type="GO" id="GO:0051286">
    <property type="term" value="C:cell tip"/>
    <property type="evidence" value="ECO:0000314"/>
    <property type="project" value="MGI"/>
</dbReference>
<dbReference type="GO" id="GO:0030425">
    <property type="term" value="C:dendrite"/>
    <property type="evidence" value="ECO:0000314"/>
    <property type="project" value="MGI"/>
</dbReference>
<dbReference type="GO" id="GO:0005783">
    <property type="term" value="C:endoplasmic reticulum"/>
    <property type="evidence" value="ECO:0000250"/>
    <property type="project" value="UniProtKB"/>
</dbReference>
<dbReference type="GO" id="GO:0005789">
    <property type="term" value="C:endoplasmic reticulum membrane"/>
    <property type="evidence" value="ECO:0007669"/>
    <property type="project" value="UniProtKB-SubCell"/>
</dbReference>
<dbReference type="GO" id="GO:0035841">
    <property type="term" value="C:new growing cell tip"/>
    <property type="evidence" value="ECO:0000314"/>
    <property type="project" value="MGI"/>
</dbReference>
<dbReference type="GO" id="GO:0005886">
    <property type="term" value="C:plasma membrane"/>
    <property type="evidence" value="ECO:0007669"/>
    <property type="project" value="UniProtKB-SubCell"/>
</dbReference>
<dbReference type="GO" id="GO:0005262">
    <property type="term" value="F:calcium channel activity"/>
    <property type="evidence" value="ECO:0000250"/>
    <property type="project" value="UniProtKB"/>
</dbReference>
<dbReference type="GO" id="GO:0005261">
    <property type="term" value="F:monoatomic cation channel activity"/>
    <property type="evidence" value="ECO:0000314"/>
    <property type="project" value="MGI"/>
</dbReference>
<dbReference type="GO" id="GO:0005216">
    <property type="term" value="F:monoatomic ion channel activity"/>
    <property type="evidence" value="ECO:0000315"/>
    <property type="project" value="MGI"/>
</dbReference>
<dbReference type="GO" id="GO:0098703">
    <property type="term" value="P:calcium ion import across plasma membrane"/>
    <property type="evidence" value="ECO:0000250"/>
    <property type="project" value="UniProtKB"/>
</dbReference>
<dbReference type="GO" id="GO:0071482">
    <property type="term" value="P:cellular response to light stimulus"/>
    <property type="evidence" value="ECO:0000315"/>
    <property type="project" value="UniProtKB"/>
</dbReference>
<dbReference type="GO" id="GO:0007216">
    <property type="term" value="P:G protein-coupled glutamate receptor signaling pathway"/>
    <property type="evidence" value="ECO:0000250"/>
    <property type="project" value="UniProtKB"/>
</dbReference>
<dbReference type="GO" id="GO:0008104">
    <property type="term" value="P:protein localization"/>
    <property type="evidence" value="ECO:0000315"/>
    <property type="project" value="MGI"/>
</dbReference>
<dbReference type="GO" id="GO:0051262">
    <property type="term" value="P:protein tetramerization"/>
    <property type="evidence" value="ECO:0007669"/>
    <property type="project" value="InterPro"/>
</dbReference>
<dbReference type="GO" id="GO:0046548">
    <property type="term" value="P:retinal rod cell development"/>
    <property type="evidence" value="ECO:0000315"/>
    <property type="project" value="MGI"/>
</dbReference>
<dbReference type="GO" id="GO:0007165">
    <property type="term" value="P:signal transduction"/>
    <property type="evidence" value="ECO:0000316"/>
    <property type="project" value="MGI"/>
</dbReference>
<dbReference type="GO" id="GO:0007601">
    <property type="term" value="P:visual perception"/>
    <property type="evidence" value="ECO:0007669"/>
    <property type="project" value="UniProtKB-KW"/>
</dbReference>
<dbReference type="Gene3D" id="1.20.5.1010">
    <property type="entry name" value="TRPM, tetramerisation domain"/>
    <property type="match status" value="1"/>
</dbReference>
<dbReference type="InterPro" id="IPR005821">
    <property type="entry name" value="Ion_trans_dom"/>
</dbReference>
<dbReference type="InterPro" id="IPR050927">
    <property type="entry name" value="TRPM"/>
</dbReference>
<dbReference type="InterPro" id="IPR041491">
    <property type="entry name" value="TRPM_SLOG"/>
</dbReference>
<dbReference type="InterPro" id="IPR032415">
    <property type="entry name" value="TRPM_tetra"/>
</dbReference>
<dbReference type="InterPro" id="IPR037162">
    <property type="entry name" value="TRPM_tetra_sf"/>
</dbReference>
<dbReference type="PANTHER" id="PTHR13800:SF13">
    <property type="entry name" value="TRANSIENT RECEPTOR POTENTIAL CATION CHANNEL SUBFAMILY M MEMBER 1"/>
    <property type="match status" value="1"/>
</dbReference>
<dbReference type="PANTHER" id="PTHR13800">
    <property type="entry name" value="TRANSIENT RECEPTOR POTENTIAL CATION CHANNEL, SUBFAMILY M, MEMBER 6"/>
    <property type="match status" value="1"/>
</dbReference>
<dbReference type="Pfam" id="PF00520">
    <property type="entry name" value="Ion_trans"/>
    <property type="match status" value="1"/>
</dbReference>
<dbReference type="Pfam" id="PF18139">
    <property type="entry name" value="LSDAT_euk"/>
    <property type="match status" value="1"/>
</dbReference>
<dbReference type="Pfam" id="PF25508">
    <property type="entry name" value="TRPM2"/>
    <property type="match status" value="1"/>
</dbReference>
<dbReference type="Pfam" id="PF16519">
    <property type="entry name" value="TRPM_tetra"/>
    <property type="match status" value="1"/>
</dbReference>
<accession>Q2TV84</accession>
<accession>O70334</accession>
<accession>Q2WEA6</accession>
<accession>Q3TPG5</accession>
<accession>Q3UEW7</accession>
<accession>Q3UFV6</accession>
<accession>Q3UFW1</accession>
<accession>Q3UG69</accession>
<accession>Q5U4B3</accession>
<accession>Q640P5</accession>